<organism>
    <name type="scientific">Methanococcus vannielii (strain ATCC 35089 / DSM 1224 / JCM 13029 / OCM 148 / SB)</name>
    <dbReference type="NCBI Taxonomy" id="406327"/>
    <lineage>
        <taxon>Archaea</taxon>
        <taxon>Methanobacteriati</taxon>
        <taxon>Methanobacteriota</taxon>
        <taxon>Methanomada group</taxon>
        <taxon>Methanococci</taxon>
        <taxon>Methanococcales</taxon>
        <taxon>Methanococcaceae</taxon>
        <taxon>Methanococcus</taxon>
    </lineage>
</organism>
<proteinExistence type="inferred from homology"/>
<reference key="1">
    <citation type="submission" date="2007-06" db="EMBL/GenBank/DDBJ databases">
        <title>Complete sequence of Methanococcus vannielii SB.</title>
        <authorList>
            <consortium name="US DOE Joint Genome Institute"/>
            <person name="Copeland A."/>
            <person name="Lucas S."/>
            <person name="Lapidus A."/>
            <person name="Barry K."/>
            <person name="Glavina del Rio T."/>
            <person name="Dalin E."/>
            <person name="Tice H."/>
            <person name="Pitluck S."/>
            <person name="Chain P."/>
            <person name="Malfatti S."/>
            <person name="Shin M."/>
            <person name="Vergez L."/>
            <person name="Schmutz J."/>
            <person name="Larimer F."/>
            <person name="Land M."/>
            <person name="Hauser L."/>
            <person name="Kyrpides N."/>
            <person name="Anderson I."/>
            <person name="Sieprawska-Lupa M."/>
            <person name="Whitman W.B."/>
            <person name="Richardson P."/>
        </authorList>
    </citation>
    <scope>NUCLEOTIDE SEQUENCE [LARGE SCALE GENOMIC DNA]</scope>
    <source>
        <strain>ATCC 35089 / DSM 1224 / JCM 13029 / OCM 148 / SB</strain>
    </source>
</reference>
<name>KCY_METVS</name>
<accession>A6USC1</accession>
<sequence>MIITIGGLPGTGTTTISKLLSEKYGLSHVCAGFIFRDMAKENNMTLQEFSNYAEKNSGVDNEIDRRQVEAAKSGNLILEGRLAGWILKKNDMVPDLSIWLKADPMVRCKRISEREHENVDLALEKMLLREASEKKRYKEIYNIEIDDLSIYDLVIESSKWGATGVFNIIEKAIK</sequence>
<comment type="catalytic activity">
    <reaction evidence="1">
        <text>CMP + ATP = CDP + ADP</text>
        <dbReference type="Rhea" id="RHEA:11600"/>
        <dbReference type="ChEBI" id="CHEBI:30616"/>
        <dbReference type="ChEBI" id="CHEBI:58069"/>
        <dbReference type="ChEBI" id="CHEBI:60377"/>
        <dbReference type="ChEBI" id="CHEBI:456216"/>
        <dbReference type="EC" id="2.7.4.25"/>
    </reaction>
</comment>
<comment type="catalytic activity">
    <reaction evidence="1">
        <text>dCMP + ATP = dCDP + ADP</text>
        <dbReference type="Rhea" id="RHEA:25094"/>
        <dbReference type="ChEBI" id="CHEBI:30616"/>
        <dbReference type="ChEBI" id="CHEBI:57566"/>
        <dbReference type="ChEBI" id="CHEBI:58593"/>
        <dbReference type="ChEBI" id="CHEBI:456216"/>
        <dbReference type="EC" id="2.7.4.25"/>
    </reaction>
</comment>
<comment type="subcellular location">
    <subcellularLocation>
        <location evidence="1">Cytoplasm</location>
    </subcellularLocation>
</comment>
<comment type="similarity">
    <text evidence="1">Belongs to the cytidylate kinase family. Type 2 subfamily.</text>
</comment>
<protein>
    <recommendedName>
        <fullName evidence="1">Cytidylate kinase</fullName>
        <shortName evidence="1">CK</shortName>
        <ecNumber evidence="1">2.7.4.25</ecNumber>
    </recommendedName>
    <alternativeName>
        <fullName evidence="1">Cytidine monophosphate kinase</fullName>
        <shortName evidence="1">CMP kinase</shortName>
    </alternativeName>
</protein>
<gene>
    <name evidence="1" type="primary">cmk</name>
    <name type="ordered locus">Mevan_1499</name>
</gene>
<dbReference type="EC" id="2.7.4.25" evidence="1"/>
<dbReference type="EMBL" id="CP000742">
    <property type="protein sequence ID" value="ABR55393.1"/>
    <property type="molecule type" value="Genomic_DNA"/>
</dbReference>
<dbReference type="RefSeq" id="WP_012066307.1">
    <property type="nucleotide sequence ID" value="NC_009634.1"/>
</dbReference>
<dbReference type="SMR" id="A6USC1"/>
<dbReference type="STRING" id="406327.Mevan_1499"/>
<dbReference type="GeneID" id="5325171"/>
<dbReference type="KEGG" id="mvn:Mevan_1499"/>
<dbReference type="eggNOG" id="arCOG01037">
    <property type="taxonomic scope" value="Archaea"/>
</dbReference>
<dbReference type="HOGENOM" id="CLU_079959_1_0_2"/>
<dbReference type="OrthoDB" id="31096at2157"/>
<dbReference type="Proteomes" id="UP000001107">
    <property type="component" value="Chromosome"/>
</dbReference>
<dbReference type="GO" id="GO:0005737">
    <property type="term" value="C:cytoplasm"/>
    <property type="evidence" value="ECO:0007669"/>
    <property type="project" value="UniProtKB-SubCell"/>
</dbReference>
<dbReference type="GO" id="GO:0005524">
    <property type="term" value="F:ATP binding"/>
    <property type="evidence" value="ECO:0007669"/>
    <property type="project" value="UniProtKB-UniRule"/>
</dbReference>
<dbReference type="GO" id="GO:0036430">
    <property type="term" value="F:CMP kinase activity"/>
    <property type="evidence" value="ECO:0007669"/>
    <property type="project" value="RHEA"/>
</dbReference>
<dbReference type="GO" id="GO:0036431">
    <property type="term" value="F:dCMP kinase activity"/>
    <property type="evidence" value="ECO:0007669"/>
    <property type="project" value="RHEA"/>
</dbReference>
<dbReference type="GO" id="GO:0006220">
    <property type="term" value="P:pyrimidine nucleotide metabolic process"/>
    <property type="evidence" value="ECO:0007669"/>
    <property type="project" value="UniProtKB-UniRule"/>
</dbReference>
<dbReference type="CDD" id="cd02020">
    <property type="entry name" value="CMPK"/>
    <property type="match status" value="1"/>
</dbReference>
<dbReference type="Gene3D" id="3.40.50.300">
    <property type="entry name" value="P-loop containing nucleotide triphosphate hydrolases"/>
    <property type="match status" value="1"/>
</dbReference>
<dbReference type="HAMAP" id="MF_00239">
    <property type="entry name" value="Cytidyl_kinase_type2"/>
    <property type="match status" value="1"/>
</dbReference>
<dbReference type="InterPro" id="IPR011892">
    <property type="entry name" value="Cyt_kin_arch"/>
</dbReference>
<dbReference type="InterPro" id="IPR011994">
    <property type="entry name" value="Cytidylate_kinase_dom"/>
</dbReference>
<dbReference type="InterPro" id="IPR027417">
    <property type="entry name" value="P-loop_NTPase"/>
</dbReference>
<dbReference type="NCBIfam" id="TIGR02173">
    <property type="entry name" value="cyt_kin_arch"/>
    <property type="match status" value="1"/>
</dbReference>
<dbReference type="Pfam" id="PF13189">
    <property type="entry name" value="Cytidylate_kin2"/>
    <property type="match status" value="1"/>
</dbReference>
<dbReference type="SUPFAM" id="SSF52540">
    <property type="entry name" value="P-loop containing nucleoside triphosphate hydrolases"/>
    <property type="match status" value="1"/>
</dbReference>
<evidence type="ECO:0000255" key="1">
    <source>
        <dbReference type="HAMAP-Rule" id="MF_00239"/>
    </source>
</evidence>
<feature type="chain" id="PRO_1000005681" description="Cytidylate kinase">
    <location>
        <begin position="1"/>
        <end position="174"/>
    </location>
</feature>
<feature type="binding site" evidence="1">
    <location>
        <begin position="7"/>
        <end position="15"/>
    </location>
    <ligand>
        <name>ATP</name>
        <dbReference type="ChEBI" id="CHEBI:30616"/>
    </ligand>
</feature>
<keyword id="KW-0067">ATP-binding</keyword>
<keyword id="KW-0963">Cytoplasm</keyword>
<keyword id="KW-0418">Kinase</keyword>
<keyword id="KW-0547">Nucleotide-binding</keyword>
<keyword id="KW-0808">Transferase</keyword>